<keyword id="KW-1003">Cell membrane</keyword>
<keyword id="KW-0217">Developmental protein</keyword>
<keyword id="KW-1015">Disulfide bond</keyword>
<keyword id="KW-0297">G-protein coupled receptor</keyword>
<keyword id="KW-0325">Glycoprotein</keyword>
<keyword id="KW-0472">Membrane</keyword>
<keyword id="KW-0675">Receptor</keyword>
<keyword id="KW-1185">Reference proteome</keyword>
<keyword id="KW-0807">Transducer</keyword>
<keyword id="KW-0812">Transmembrane</keyword>
<keyword id="KW-1133">Transmembrane helix</keyword>
<keyword id="KW-0879">Wnt signaling pathway</keyword>
<proteinExistence type="evidence at transcript level"/>
<gene>
    <name type="primary">FZD2</name>
    <name type="synonym">FZ2</name>
</gene>
<name>FZD2_CHICK</name>
<evidence type="ECO:0000250" key="1"/>
<evidence type="ECO:0000250" key="2">
    <source>
        <dbReference type="UniProtKB" id="Q14332"/>
    </source>
</evidence>
<evidence type="ECO:0000255" key="3"/>
<evidence type="ECO:0000255" key="4">
    <source>
        <dbReference type="PROSITE-ProRule" id="PRU00090"/>
    </source>
</evidence>
<evidence type="ECO:0000269" key="5">
    <source>
    </source>
</evidence>
<evidence type="ECO:0000305" key="6"/>
<reference key="1">
    <citation type="journal article" date="2000" name="Mech. Dev.">
        <title>Characterization of avian frizzled genes in cranial placode development.</title>
        <authorList>
            <person name="Stark M.R."/>
            <person name="Biggs J.J."/>
            <person name="Schoenwolf G.C."/>
            <person name="Rao M.S."/>
        </authorList>
    </citation>
    <scope>NUCLEOTIDE SEQUENCE [MRNA]</scope>
</reference>
<reference key="2">
    <citation type="journal article" date="1999" name="Cell. Mol. Biol.">
        <title>Differential expression of the frizzled family involved in Wnt signaling during chick limb development.</title>
        <authorList>
            <person name="Nohno T."/>
            <person name="Kawakami Y."/>
            <person name="Wada N."/>
            <person name="Komaguchi C."/>
            <person name="Nishimatsu S."/>
        </authorList>
    </citation>
    <scope>NUCLEOTIDE SEQUENCE [MRNA] OF 233-315</scope>
    <source>
        <tissue>Limb bud</tissue>
    </source>
</reference>
<reference key="3">
    <citation type="journal article" date="2015" name="Hum. Mol. Genet.">
        <title>A mutation in FRIZZLED2 impairs Wnt signaling and causes autosomal dominant omodysplasia.</title>
        <authorList>
            <person name="Saal H.M."/>
            <person name="Prows C.A."/>
            <person name="Guerreiro I."/>
            <person name="Donlin M."/>
            <person name="Knudson L."/>
            <person name="Sund K.L."/>
            <person name="Chang C.F."/>
            <person name="Brugmann S.A."/>
            <person name="Stottmann R.W."/>
        </authorList>
    </citation>
    <scope>TISSUE SPECIFICITY</scope>
</reference>
<protein>
    <recommendedName>
        <fullName>Frizzled-2</fullName>
        <shortName>Fz-2</shortName>
        <shortName>cFz-2</shortName>
    </recommendedName>
</protein>
<accession>Q9IA06</accession>
<accession>Q9PTW4</accession>
<sequence length="523" mass="59281">PDHGFCQPISIPLCTDIAYNQTIMPNLLGHTNQEDAGLEVHQFYPLVKVQCSLELKFFLCSMYAPVCTVLEQAIPPCRSICERARQGCEALMNKFGFQWPERLRCENFPRHGAEQICVGQNHSEDGGSSAALLTSAAPPAAHGTPGAPRYATPDRPFHCPRALKVPGYLNYKFLGEKDCAAPCEPSRPDGHMFFNEDEIRFARVWILVWSVLCCASTFFTVTTYLVDMQRFRYPERPIIFLSGCYTMVSVAYIAGFVLEERVVCNERFQEDGYRTVVQGTKKEGCTILFMMLYFFSMASSIWWVILSLTWFLAAGMKWGHEAIEANSQYFHLAAWAVPAVKTITILAMGQIDGDLLSGVCFVGLNGIDPLRGFVLAPLFVYLFIGTSFLLAGFVSLFRIRTIMKHGGTKTEKLERLMVRIGVFSVLYTVPATIVIACYFYEQAFRQHWERSWISQHCKSLAIPCPLHFTPRMTPDFTVYMIKYLMTLIVGITSGFWIFSGKTLHSWRKFYTRLTNSRQGETTV</sequence>
<comment type="function">
    <text evidence="2">Receptor for Wnt proteins. Most of frizzled receptors are coupled to the beta-catenin canonical signaling pathway, which leads to the activation of disheveled proteins, inhibition of GSK-3 kinase, nuclear accumulation of beta-catenin and activation of Wnt target genes (By similarity). A second signaling pathway involving PKC and calcium fluxes has been seen for some family members, but it is not yet clear if it represents a distinct pathway or if it can be integrated in the canonical pathway, as PKC seems to be required for Wnt-mediated inactivation of GSK-3 kinase. Both pathways seem to involve interactions with G-proteins. May be involved in transduction and intercellular transmission of polarity information during tissue morphogenesis and/or in differentiated tissues.</text>
</comment>
<comment type="subcellular location">
    <subcellularLocation>
        <location>Membrane</location>
        <topology>Multi-pass membrane protein</topology>
    </subcellularLocation>
    <subcellularLocation>
        <location evidence="1">Cell membrane</location>
        <topology evidence="1">Multi-pass membrane protein</topology>
    </subcellularLocation>
</comment>
<comment type="tissue specificity">
    <text evidence="5">Expressed in the developing head and limbs (PubMed:25759469). Expressed broadly in cranial ectoderm. Also expressed in the developing somites (dermomyotome) and in other cranial placodes, including the olfactory, lens, and otic placodes (rostral rim of the vesicle).</text>
</comment>
<comment type="developmental stage">
    <text>At stage 8, faintly expressed in cranial ectoderm and in the somites. At stages 9-10, broadly expressed throughout the cranial ectoderm. By stages 11-12, more robust expression is detected in ectoderm adjacent to the hindbrain, including the otic placodes. Transiently expressed in the lens placode and ectoderm of the head at stages 13-15. Down-regulated in differentiating structures of older embryos.</text>
</comment>
<comment type="domain">
    <text evidence="1">Lys-Thr-X-X-X-Trp motif interacts with the PDZ domain of Dvl (Disheveled) family members and is involved in the activation of the Wnt/beta-catenin signaling pathway.</text>
</comment>
<comment type="domain">
    <text evidence="1">The FZ domain is involved in binding with Wnt ligands.</text>
</comment>
<comment type="similarity">
    <text evidence="6">Belongs to the G-protein coupled receptor Fz/Smo family.</text>
</comment>
<organism>
    <name type="scientific">Gallus gallus</name>
    <name type="common">Chicken</name>
    <dbReference type="NCBI Taxonomy" id="9031"/>
    <lineage>
        <taxon>Eukaryota</taxon>
        <taxon>Metazoa</taxon>
        <taxon>Chordata</taxon>
        <taxon>Craniata</taxon>
        <taxon>Vertebrata</taxon>
        <taxon>Euteleostomi</taxon>
        <taxon>Archelosauria</taxon>
        <taxon>Archosauria</taxon>
        <taxon>Dinosauria</taxon>
        <taxon>Saurischia</taxon>
        <taxon>Theropoda</taxon>
        <taxon>Coelurosauria</taxon>
        <taxon>Aves</taxon>
        <taxon>Neognathae</taxon>
        <taxon>Galloanserae</taxon>
        <taxon>Galliformes</taxon>
        <taxon>Phasianidae</taxon>
        <taxon>Phasianinae</taxon>
        <taxon>Gallus</taxon>
    </lineage>
</organism>
<feature type="chain" id="PRO_0000205975" description="Frizzled-2">
    <location>
        <begin position="1" status="less than"/>
        <end position="523"/>
    </location>
</feature>
<feature type="topological domain" description="Extracellular" evidence="3">
    <location>
        <begin position="1"/>
        <end position="205"/>
    </location>
</feature>
<feature type="transmembrane region" description="Helical; Name=1" evidence="3">
    <location>
        <begin position="206"/>
        <end position="226"/>
    </location>
</feature>
<feature type="topological domain" description="Cytoplasmic" evidence="3">
    <location>
        <begin position="227"/>
        <end position="237"/>
    </location>
</feature>
<feature type="transmembrane region" description="Helical; Name=2" evidence="3">
    <location>
        <begin position="238"/>
        <end position="258"/>
    </location>
</feature>
<feature type="topological domain" description="Extracellular" evidence="3">
    <location>
        <begin position="259"/>
        <end position="285"/>
    </location>
</feature>
<feature type="transmembrane region" description="Helical; Name=3" evidence="3">
    <location>
        <begin position="286"/>
        <end position="306"/>
    </location>
</feature>
<feature type="topological domain" description="Cytoplasmic" evidence="3">
    <location>
        <begin position="307"/>
        <end position="328"/>
    </location>
</feature>
<feature type="transmembrane region" description="Helical; Name=4" evidence="3">
    <location>
        <begin position="329"/>
        <end position="349"/>
    </location>
</feature>
<feature type="topological domain" description="Extracellular" evidence="3">
    <location>
        <begin position="350"/>
        <end position="372"/>
    </location>
</feature>
<feature type="transmembrane region" description="Helical; Name=5" evidence="3">
    <location>
        <begin position="373"/>
        <end position="393"/>
    </location>
</feature>
<feature type="topological domain" description="Cytoplasmic" evidence="3">
    <location>
        <begin position="394"/>
        <end position="419"/>
    </location>
</feature>
<feature type="transmembrane region" description="Helical; Name=6" evidence="3">
    <location>
        <begin position="420"/>
        <end position="440"/>
    </location>
</feature>
<feature type="topological domain" description="Extracellular" evidence="3">
    <location>
        <begin position="441"/>
        <end position="477"/>
    </location>
</feature>
<feature type="transmembrane region" description="Helical; Name=7" evidence="3">
    <location>
        <begin position="478"/>
        <end position="498"/>
    </location>
</feature>
<feature type="topological domain" description="Cytoplasmic" evidence="3">
    <location>
        <begin position="499"/>
        <end position="523"/>
    </location>
</feature>
<feature type="domain" description="FZ" evidence="4">
    <location>
        <begin position="1"/>
        <end position="120"/>
    </location>
</feature>
<feature type="short sequence motif" description="Lys-Thr-X-X-X-Trp motif, mediates interaction with the PDZ domain of Dvl family members" evidence="1">
    <location>
        <begin position="501"/>
        <end position="506"/>
    </location>
</feature>
<feature type="short sequence motif" description="PDZ-binding">
    <location>
        <begin position="521"/>
        <end position="523"/>
    </location>
</feature>
<feature type="glycosylation site" description="N-linked (GlcNAc...) asparagine" evidence="3">
    <location>
        <position position="20"/>
    </location>
</feature>
<feature type="glycosylation site" description="N-linked (GlcNAc...) asparagine" evidence="3">
    <location>
        <position position="121"/>
    </location>
</feature>
<feature type="disulfide bond" evidence="4">
    <location>
        <begin position="6"/>
        <end position="67"/>
    </location>
</feature>
<feature type="disulfide bond" evidence="4">
    <location>
        <begin position="14"/>
        <end position="60"/>
    </location>
</feature>
<feature type="disulfide bond" evidence="4">
    <location>
        <begin position="51"/>
        <end position="88"/>
    </location>
</feature>
<feature type="disulfide bond" evidence="4">
    <location>
        <begin position="77"/>
        <end position="117"/>
    </location>
</feature>
<feature type="disulfide bond" evidence="4">
    <location>
        <begin position="81"/>
        <end position="105"/>
    </location>
</feature>
<feature type="non-terminal residue">
    <location>
        <position position="1"/>
    </location>
</feature>
<dbReference type="EMBL" id="AF224315">
    <property type="protein sequence ID" value="AAF61095.1"/>
    <property type="molecule type" value="mRNA"/>
</dbReference>
<dbReference type="EMBL" id="AB029449">
    <property type="protein sequence ID" value="BAA89399.1"/>
    <property type="molecule type" value="mRNA"/>
</dbReference>
<dbReference type="SMR" id="Q9IA06"/>
<dbReference type="FunCoup" id="Q9IA06">
    <property type="interactions" value="762"/>
</dbReference>
<dbReference type="STRING" id="9031.ENSGALP00000051122"/>
<dbReference type="GlyCosmos" id="Q9IA06">
    <property type="glycosylation" value="2 sites, No reported glycans"/>
</dbReference>
<dbReference type="GlyGen" id="Q9IA06">
    <property type="glycosylation" value="2 sites"/>
</dbReference>
<dbReference type="PaxDb" id="9031-ENSGALP00000034947"/>
<dbReference type="VEuPathDB" id="HostDB:geneid_374061"/>
<dbReference type="eggNOG" id="KOG3577">
    <property type="taxonomic scope" value="Eukaryota"/>
</dbReference>
<dbReference type="InParanoid" id="Q9IA06"/>
<dbReference type="OrthoDB" id="10053709at2759"/>
<dbReference type="Proteomes" id="UP000000539">
    <property type="component" value="Unassembled WGS sequence"/>
</dbReference>
<dbReference type="GO" id="GO:0005886">
    <property type="term" value="C:plasma membrane"/>
    <property type="evidence" value="ECO:0000318"/>
    <property type="project" value="GO_Central"/>
</dbReference>
<dbReference type="GO" id="GO:0004930">
    <property type="term" value="F:G protein-coupled receptor activity"/>
    <property type="evidence" value="ECO:0007669"/>
    <property type="project" value="UniProtKB-KW"/>
</dbReference>
<dbReference type="GO" id="GO:0042813">
    <property type="term" value="F:Wnt receptor activity"/>
    <property type="evidence" value="ECO:0000318"/>
    <property type="project" value="GO_Central"/>
</dbReference>
<dbReference type="GO" id="GO:0017147">
    <property type="term" value="F:Wnt-protein binding"/>
    <property type="evidence" value="ECO:0000318"/>
    <property type="project" value="GO_Central"/>
</dbReference>
<dbReference type="GO" id="GO:0060070">
    <property type="term" value="P:canonical Wnt signaling pathway"/>
    <property type="evidence" value="ECO:0000318"/>
    <property type="project" value="GO_Central"/>
</dbReference>
<dbReference type="GO" id="GO:0035567">
    <property type="term" value="P:non-canonical Wnt signaling pathway"/>
    <property type="evidence" value="ECO:0000318"/>
    <property type="project" value="GO_Central"/>
</dbReference>
<dbReference type="CDD" id="cd15245">
    <property type="entry name" value="7tmF_FZD2"/>
    <property type="match status" value="1"/>
</dbReference>
<dbReference type="CDD" id="cd07464">
    <property type="entry name" value="CRD_FZ2"/>
    <property type="match status" value="1"/>
</dbReference>
<dbReference type="FunFam" id="1.10.2000.10:FF:000003">
    <property type="entry name" value="Frizzled class receptor 2"/>
    <property type="match status" value="1"/>
</dbReference>
<dbReference type="FunFam" id="1.20.1070.10:FF:000029">
    <property type="entry name" value="Frizzled class receptor 2"/>
    <property type="match status" value="1"/>
</dbReference>
<dbReference type="Gene3D" id="1.10.2000.10">
    <property type="entry name" value="Frizzled cysteine-rich domain"/>
    <property type="match status" value="1"/>
</dbReference>
<dbReference type="Gene3D" id="1.20.1070.10">
    <property type="entry name" value="Rhodopsin 7-helix transmembrane proteins"/>
    <property type="match status" value="1"/>
</dbReference>
<dbReference type="InterPro" id="IPR015526">
    <property type="entry name" value="Frizzled/SFRP"/>
</dbReference>
<dbReference type="InterPro" id="IPR000539">
    <property type="entry name" value="Frizzled/Smoothened_7TM"/>
</dbReference>
<dbReference type="InterPro" id="IPR020067">
    <property type="entry name" value="Frizzled_dom"/>
</dbReference>
<dbReference type="InterPro" id="IPR036790">
    <property type="entry name" value="Frizzled_dom_sf"/>
</dbReference>
<dbReference type="InterPro" id="IPR041778">
    <property type="entry name" value="FZ2_CRD"/>
</dbReference>
<dbReference type="InterPro" id="IPR017981">
    <property type="entry name" value="GPCR_2-like_7TM"/>
</dbReference>
<dbReference type="PANTHER" id="PTHR11309">
    <property type="entry name" value="FRIZZLED"/>
    <property type="match status" value="1"/>
</dbReference>
<dbReference type="PANTHER" id="PTHR11309:SF34">
    <property type="entry name" value="FRIZZLED-2"/>
    <property type="match status" value="1"/>
</dbReference>
<dbReference type="Pfam" id="PF01534">
    <property type="entry name" value="Frizzled"/>
    <property type="match status" value="1"/>
</dbReference>
<dbReference type="Pfam" id="PF01392">
    <property type="entry name" value="Fz"/>
    <property type="match status" value="1"/>
</dbReference>
<dbReference type="PRINTS" id="PR00489">
    <property type="entry name" value="FRIZZLED"/>
</dbReference>
<dbReference type="SMART" id="SM00063">
    <property type="entry name" value="FRI"/>
    <property type="match status" value="1"/>
</dbReference>
<dbReference type="SMART" id="SM01330">
    <property type="entry name" value="Frizzled"/>
    <property type="match status" value="1"/>
</dbReference>
<dbReference type="SUPFAM" id="SSF63501">
    <property type="entry name" value="Frizzled cysteine-rich domain"/>
    <property type="match status" value="1"/>
</dbReference>
<dbReference type="PROSITE" id="PS50038">
    <property type="entry name" value="FZ"/>
    <property type="match status" value="1"/>
</dbReference>
<dbReference type="PROSITE" id="PS50261">
    <property type="entry name" value="G_PROTEIN_RECEP_F2_4"/>
    <property type="match status" value="1"/>
</dbReference>